<reference key="1">
    <citation type="journal article" date="2014" name="Peptides">
        <title>A family of antimicrobial and immunomodulatory peptides related to the frenatins from skin secretions of the Orinoco lime frog Sphaenorhynchus lacteus (Hylidae).</title>
        <authorList>
            <person name="Conlon J.M."/>
            <person name="Mechkarska M."/>
            <person name="Radosavljevic G."/>
            <person name="Attoub S."/>
            <person name="King J.D."/>
            <person name="Lukic M.L."/>
            <person name="McClean S."/>
        </authorList>
    </citation>
    <scope>PROTEIN SEQUENCE</scope>
    <scope>FUNCTION</scope>
    <scope>MASS SPECTROMETRY</scope>
    <scope>SUBCELLULAR LOCATION</scope>
    <scope>AMIDATION AT SER-16</scope>
    <source>
        <tissue>Skin secretion</tissue>
    </source>
</reference>
<reference key="2">
    <citation type="journal article" date="2019" name="Biochimie">
        <title>Insulinotropic activity of the host-defense peptide frenatin 2D: conformational, structure-function and mechanistic studies.</title>
        <authorList>
            <person name="Musale V."/>
            <person name="Guilhaudis L."/>
            <person name="Abdel-Wahab Y.H.A."/>
            <person name="Flatt P.R."/>
            <person name="Conlon J.M."/>
        </authorList>
    </citation>
    <scope>FUNCTION AS INSULINOTROPIC PEPTIDE</scope>
</reference>
<organism>
    <name type="scientific">Sphaenorhynchus lacteus</name>
    <name type="common">Orinoco lime treefrog</name>
    <name type="synonym">Hyla lactea</name>
    <dbReference type="NCBI Taxonomy" id="279984"/>
    <lineage>
        <taxon>Eukaryota</taxon>
        <taxon>Metazoa</taxon>
        <taxon>Chordata</taxon>
        <taxon>Craniata</taxon>
        <taxon>Vertebrata</taxon>
        <taxon>Euteleostomi</taxon>
        <taxon>Amphibia</taxon>
        <taxon>Batrachia</taxon>
        <taxon>Anura</taxon>
        <taxon>Neobatrachia</taxon>
        <taxon>Hyloidea</taxon>
        <taxon>Hylidae</taxon>
        <taxon>Hylinae</taxon>
        <taxon>Dendropsophini</taxon>
        <taxon>Sphaenorhynchus</taxon>
    </lineage>
</organism>
<keyword id="KW-0027">Amidation</keyword>
<keyword id="KW-0878">Amphibian defense peptide</keyword>
<keyword id="KW-0044">Antibiotic</keyword>
<keyword id="KW-0929">Antimicrobial</keyword>
<keyword id="KW-0903">Direct protein sequencing</keyword>
<keyword id="KW-0391">Immunity</keyword>
<keyword id="KW-0399">Innate immunity</keyword>
<accession>P0DTV6</accession>
<comment type="function">
    <text evidence="1 2">Antimicrobial peptide with potent activity against Gram-negative bacteria (PubMed:24704757). In vitro, is cytotoxic to non-small cell lung adenocarcinoma A549 cells (PubMed:24704757). Also, stimulates production of some pro-inflammatory cytokines (IL-1beta, and IL-23, but not TNF-alpha) by mouse peritoneal macrophages and down-regulates production of the anti-inflammatory cytokine IL-10 by lipopolysaccharide (LPS)-stimulated cells (PubMed:24704757). Very weakly stimulates insulin release (PubMed:30244134). Has a very weak activity in hemolysis (PubMed:24704757).</text>
</comment>
<comment type="mass spectrometry"/>
<comment type="similarity">
    <text evidence="4">Belongs to the frog skin active peptide (FSAP) family. Frenatin subfamily.</text>
</comment>
<protein>
    <recommendedName>
        <fullName evidence="3">Frenatin 2.2S</fullName>
        <shortName evidence="4">F2.2S</shortName>
    </recommendedName>
</protein>
<name>FRE22_SPHLA</name>
<feature type="peptide" id="PRO_0000450237" description="Frenatin 2.2S" evidence="1">
    <location>
        <begin position="1"/>
        <end position="16"/>
    </location>
</feature>
<feature type="modified residue" description="Serine amide" evidence="1">
    <location>
        <position position="16"/>
    </location>
</feature>
<proteinExistence type="evidence at protein level"/>
<evidence type="ECO:0000269" key="1">
    <source>
    </source>
</evidence>
<evidence type="ECO:0000269" key="2">
    <source>
    </source>
</evidence>
<evidence type="ECO:0000303" key="3">
    <source>
    </source>
</evidence>
<evidence type="ECO:0000305" key="4"/>
<sequence>GLVGTLLGHIGKAILS</sequence>
<dbReference type="GO" id="GO:0042742">
    <property type="term" value="P:defense response to bacterium"/>
    <property type="evidence" value="ECO:0007669"/>
    <property type="project" value="UniProtKB-KW"/>
</dbReference>
<dbReference type="GO" id="GO:0045087">
    <property type="term" value="P:innate immune response"/>
    <property type="evidence" value="ECO:0007669"/>
    <property type="project" value="UniProtKB-KW"/>
</dbReference>